<name>CUTA_SALG2</name>
<evidence type="ECO:0000255" key="1">
    <source>
        <dbReference type="HAMAP-Rule" id="MF_01160"/>
    </source>
</evidence>
<gene>
    <name evidence="1" type="primary">cutA</name>
    <name type="ordered locus">SG4166</name>
</gene>
<comment type="function">
    <text evidence="1">Involved in resistance toward heavy metals.</text>
</comment>
<comment type="cofactor">
    <cofactor evidence="1">
        <name>Cu cation</name>
        <dbReference type="ChEBI" id="CHEBI:23378"/>
    </cofactor>
    <text evidence="1">Binds 1 copper ion per subunit.</text>
</comment>
<comment type="subunit">
    <text evidence="1">Homotrimer.</text>
</comment>
<comment type="subcellular location">
    <subcellularLocation>
        <location evidence="1">Cytoplasm</location>
    </subcellularLocation>
</comment>
<comment type="similarity">
    <text evidence="1">Belongs to the CutA family.</text>
</comment>
<accession>B5R985</accession>
<proteinExistence type="inferred from homology"/>
<sequence length="115" mass="12681">MLDVKSQDISIPEAVVVLCTAPDEATAQDLAAKVLAEKLAACATLLPGATSLYYWEGKLEQEYEVQMILKTTVSHQQALIDCLKSHHPYQTPELLVLPVTHGDTDYLSWLNASLR</sequence>
<protein>
    <recommendedName>
        <fullName evidence="1">Divalent-cation tolerance protein CutA</fullName>
    </recommendedName>
</protein>
<keyword id="KW-0186">Copper</keyword>
<keyword id="KW-0963">Cytoplasm</keyword>
<keyword id="KW-0479">Metal-binding</keyword>
<feature type="chain" id="PRO_1000137850" description="Divalent-cation tolerance protein CutA">
    <location>
        <begin position="1"/>
        <end position="115"/>
    </location>
</feature>
<feature type="binding site" evidence="1">
    <location>
        <position position="19"/>
    </location>
    <ligand>
        <name>Cu cation</name>
        <dbReference type="ChEBI" id="CHEBI:23378"/>
    </ligand>
</feature>
<feature type="binding site" evidence="1">
    <location>
        <position position="86"/>
    </location>
    <ligand>
        <name>Cu cation</name>
        <dbReference type="ChEBI" id="CHEBI:23378"/>
    </ligand>
</feature>
<feature type="binding site" evidence="1">
    <location>
        <position position="87"/>
    </location>
    <ligand>
        <name>Cu cation</name>
        <dbReference type="ChEBI" id="CHEBI:23378"/>
    </ligand>
</feature>
<reference key="1">
    <citation type="journal article" date="2008" name="Genome Res.">
        <title>Comparative genome analysis of Salmonella enteritidis PT4 and Salmonella gallinarum 287/91 provides insights into evolutionary and host adaptation pathways.</title>
        <authorList>
            <person name="Thomson N.R."/>
            <person name="Clayton D.J."/>
            <person name="Windhorst D."/>
            <person name="Vernikos G."/>
            <person name="Davidson S."/>
            <person name="Churcher C."/>
            <person name="Quail M.A."/>
            <person name="Stevens M."/>
            <person name="Jones M.A."/>
            <person name="Watson M."/>
            <person name="Barron A."/>
            <person name="Layton A."/>
            <person name="Pickard D."/>
            <person name="Kingsley R.A."/>
            <person name="Bignell A."/>
            <person name="Clark L."/>
            <person name="Harris B."/>
            <person name="Ormond D."/>
            <person name="Abdellah Z."/>
            <person name="Brooks K."/>
            <person name="Cherevach I."/>
            <person name="Chillingworth T."/>
            <person name="Woodward J."/>
            <person name="Norberczak H."/>
            <person name="Lord A."/>
            <person name="Arrowsmith C."/>
            <person name="Jagels K."/>
            <person name="Moule S."/>
            <person name="Mungall K."/>
            <person name="Saunders M."/>
            <person name="Whitehead S."/>
            <person name="Chabalgoity J.A."/>
            <person name="Maskell D."/>
            <person name="Humphreys T."/>
            <person name="Roberts M."/>
            <person name="Barrow P.A."/>
            <person name="Dougan G."/>
            <person name="Parkhill J."/>
        </authorList>
    </citation>
    <scope>NUCLEOTIDE SEQUENCE [LARGE SCALE GENOMIC DNA]</scope>
    <source>
        <strain>287/91 / NCTC 13346</strain>
    </source>
</reference>
<dbReference type="EMBL" id="AM933173">
    <property type="protein sequence ID" value="CAR39933.1"/>
    <property type="molecule type" value="Genomic_DNA"/>
</dbReference>
<dbReference type="RefSeq" id="WP_000887832.1">
    <property type="nucleotide sequence ID" value="NC_011274.1"/>
</dbReference>
<dbReference type="SMR" id="B5R985"/>
<dbReference type="GeneID" id="66758552"/>
<dbReference type="KEGG" id="seg:SG4166"/>
<dbReference type="HOGENOM" id="CLU_098807_3_0_6"/>
<dbReference type="Proteomes" id="UP000008321">
    <property type="component" value="Chromosome"/>
</dbReference>
<dbReference type="GO" id="GO:0005737">
    <property type="term" value="C:cytoplasm"/>
    <property type="evidence" value="ECO:0007669"/>
    <property type="project" value="UniProtKB-SubCell"/>
</dbReference>
<dbReference type="GO" id="GO:0005507">
    <property type="term" value="F:copper ion binding"/>
    <property type="evidence" value="ECO:0007669"/>
    <property type="project" value="UniProtKB-UniRule"/>
</dbReference>
<dbReference type="GO" id="GO:0010038">
    <property type="term" value="P:response to metal ion"/>
    <property type="evidence" value="ECO:0007669"/>
    <property type="project" value="InterPro"/>
</dbReference>
<dbReference type="FunFam" id="3.30.70.120:FF:000004">
    <property type="entry name" value="Divalent-cation tolerance protein CutA"/>
    <property type="match status" value="1"/>
</dbReference>
<dbReference type="Gene3D" id="3.30.70.120">
    <property type="match status" value="1"/>
</dbReference>
<dbReference type="HAMAP" id="MF_01160">
    <property type="entry name" value="CutA"/>
    <property type="match status" value="1"/>
</dbReference>
<dbReference type="InterPro" id="IPR023700">
    <property type="entry name" value="CutA_Enterobact"/>
</dbReference>
<dbReference type="InterPro" id="IPR004323">
    <property type="entry name" value="Ion_tolerance_CutA"/>
</dbReference>
<dbReference type="InterPro" id="IPR011322">
    <property type="entry name" value="N-reg_PII-like_a/b"/>
</dbReference>
<dbReference type="InterPro" id="IPR015867">
    <property type="entry name" value="N-reg_PII/ATP_PRibTrfase_C"/>
</dbReference>
<dbReference type="NCBIfam" id="NF007930">
    <property type="entry name" value="PRK10645.1"/>
    <property type="match status" value="1"/>
</dbReference>
<dbReference type="PANTHER" id="PTHR23419">
    <property type="entry name" value="DIVALENT CATION TOLERANCE CUTA-RELATED"/>
    <property type="match status" value="1"/>
</dbReference>
<dbReference type="PANTHER" id="PTHR23419:SF8">
    <property type="entry name" value="FI09726P"/>
    <property type="match status" value="1"/>
</dbReference>
<dbReference type="Pfam" id="PF03091">
    <property type="entry name" value="CutA1"/>
    <property type="match status" value="1"/>
</dbReference>
<dbReference type="SUPFAM" id="SSF54913">
    <property type="entry name" value="GlnB-like"/>
    <property type="match status" value="1"/>
</dbReference>
<organism>
    <name type="scientific">Salmonella gallinarum (strain 287/91 / NCTC 13346)</name>
    <dbReference type="NCBI Taxonomy" id="550538"/>
    <lineage>
        <taxon>Bacteria</taxon>
        <taxon>Pseudomonadati</taxon>
        <taxon>Pseudomonadota</taxon>
        <taxon>Gammaproteobacteria</taxon>
        <taxon>Enterobacterales</taxon>
        <taxon>Enterobacteriaceae</taxon>
        <taxon>Salmonella</taxon>
    </lineage>
</organism>